<feature type="chain" id="PRO_0000234988" description="Probable serine hydroxymethyltransferase">
    <location>
        <begin position="1"/>
        <end position="418"/>
    </location>
</feature>
<feature type="binding site" evidence="1">
    <location>
        <position position="118"/>
    </location>
    <ligand>
        <name>(6S)-5,6,7,8-tetrahydrofolate</name>
        <dbReference type="ChEBI" id="CHEBI:57453"/>
    </ligand>
</feature>
<feature type="binding site" evidence="1">
    <location>
        <begin position="122"/>
        <end position="124"/>
    </location>
    <ligand>
        <name>(6S)-5,6,7,8-tetrahydrofolate</name>
        <dbReference type="ChEBI" id="CHEBI:57453"/>
    </ligand>
</feature>
<feature type="binding site" evidence="1">
    <location>
        <begin position="351"/>
        <end position="353"/>
    </location>
    <ligand>
        <name>(6S)-5,6,7,8-tetrahydrofolate</name>
        <dbReference type="ChEBI" id="CHEBI:57453"/>
    </ligand>
</feature>
<feature type="modified residue" description="N6-(pyridoxal phosphate)lysine" evidence="1">
    <location>
        <position position="226"/>
    </location>
</feature>
<accession>Q4A8E1</accession>
<dbReference type="EC" id="2.1.2.1" evidence="1"/>
<dbReference type="EMBL" id="AE017244">
    <property type="protein sequence ID" value="AAZ53598.1"/>
    <property type="molecule type" value="Genomic_DNA"/>
</dbReference>
<dbReference type="RefSeq" id="WP_011290088.1">
    <property type="nucleotide sequence ID" value="NC_007332.1"/>
</dbReference>
<dbReference type="SMR" id="Q4A8E1"/>
<dbReference type="KEGG" id="mhp:MHP7448_0224"/>
<dbReference type="HOGENOM" id="CLU_022477_2_1_14"/>
<dbReference type="UniPathway" id="UPA00193"/>
<dbReference type="Proteomes" id="UP000000553">
    <property type="component" value="Chromosome"/>
</dbReference>
<dbReference type="GO" id="GO:0005829">
    <property type="term" value="C:cytosol"/>
    <property type="evidence" value="ECO:0007669"/>
    <property type="project" value="TreeGrafter"/>
</dbReference>
<dbReference type="GO" id="GO:0004372">
    <property type="term" value="F:glycine hydroxymethyltransferase activity"/>
    <property type="evidence" value="ECO:0007669"/>
    <property type="project" value="UniProtKB-EC"/>
</dbReference>
<dbReference type="GO" id="GO:0030170">
    <property type="term" value="F:pyridoxal phosphate binding"/>
    <property type="evidence" value="ECO:0007669"/>
    <property type="project" value="UniProtKB-UniRule"/>
</dbReference>
<dbReference type="GO" id="GO:0019264">
    <property type="term" value="P:glycine biosynthetic process from serine"/>
    <property type="evidence" value="ECO:0007669"/>
    <property type="project" value="InterPro"/>
</dbReference>
<dbReference type="GO" id="GO:0035999">
    <property type="term" value="P:tetrahydrofolate interconversion"/>
    <property type="evidence" value="ECO:0007669"/>
    <property type="project" value="UniProtKB-UniRule"/>
</dbReference>
<dbReference type="CDD" id="cd00378">
    <property type="entry name" value="SHMT"/>
    <property type="match status" value="1"/>
</dbReference>
<dbReference type="FunFam" id="3.40.640.10:FF:000001">
    <property type="entry name" value="Serine hydroxymethyltransferase"/>
    <property type="match status" value="1"/>
</dbReference>
<dbReference type="Gene3D" id="3.90.1150.10">
    <property type="entry name" value="Aspartate Aminotransferase, domain 1"/>
    <property type="match status" value="1"/>
</dbReference>
<dbReference type="Gene3D" id="3.40.640.10">
    <property type="entry name" value="Type I PLP-dependent aspartate aminotransferase-like (Major domain)"/>
    <property type="match status" value="1"/>
</dbReference>
<dbReference type="HAMAP" id="MF_00051">
    <property type="entry name" value="SHMT"/>
    <property type="match status" value="1"/>
</dbReference>
<dbReference type="InterPro" id="IPR015424">
    <property type="entry name" value="PyrdxlP-dep_Trfase"/>
</dbReference>
<dbReference type="InterPro" id="IPR015421">
    <property type="entry name" value="PyrdxlP-dep_Trfase_major"/>
</dbReference>
<dbReference type="InterPro" id="IPR015422">
    <property type="entry name" value="PyrdxlP-dep_Trfase_small"/>
</dbReference>
<dbReference type="InterPro" id="IPR001085">
    <property type="entry name" value="Ser_HO-MeTrfase"/>
</dbReference>
<dbReference type="InterPro" id="IPR049943">
    <property type="entry name" value="Ser_HO-MeTrfase-like"/>
</dbReference>
<dbReference type="InterPro" id="IPR019798">
    <property type="entry name" value="Ser_HO-MeTrfase_PLP_BS"/>
</dbReference>
<dbReference type="InterPro" id="IPR039429">
    <property type="entry name" value="SHMT-like_dom"/>
</dbReference>
<dbReference type="NCBIfam" id="NF000586">
    <property type="entry name" value="PRK00011.1"/>
    <property type="match status" value="1"/>
</dbReference>
<dbReference type="PANTHER" id="PTHR11680">
    <property type="entry name" value="SERINE HYDROXYMETHYLTRANSFERASE"/>
    <property type="match status" value="1"/>
</dbReference>
<dbReference type="PANTHER" id="PTHR11680:SF35">
    <property type="entry name" value="SERINE HYDROXYMETHYLTRANSFERASE 1"/>
    <property type="match status" value="1"/>
</dbReference>
<dbReference type="Pfam" id="PF00464">
    <property type="entry name" value="SHMT"/>
    <property type="match status" value="1"/>
</dbReference>
<dbReference type="PIRSF" id="PIRSF000412">
    <property type="entry name" value="SHMT"/>
    <property type="match status" value="1"/>
</dbReference>
<dbReference type="SUPFAM" id="SSF53383">
    <property type="entry name" value="PLP-dependent transferases"/>
    <property type="match status" value="1"/>
</dbReference>
<dbReference type="PROSITE" id="PS00096">
    <property type="entry name" value="SHMT"/>
    <property type="match status" value="1"/>
</dbReference>
<keyword id="KW-0963">Cytoplasm</keyword>
<keyword id="KW-0554">One-carbon metabolism</keyword>
<keyword id="KW-0663">Pyridoxal phosphate</keyword>
<keyword id="KW-0808">Transferase</keyword>
<reference key="1">
    <citation type="journal article" date="2005" name="J. Bacteriol.">
        <title>Swine and poultry pathogens: the complete genome sequences of two strains of Mycoplasma hyopneumoniae and a strain of Mycoplasma synoviae.</title>
        <authorList>
            <person name="Vasconcelos A.T.R."/>
            <person name="Ferreira H.B."/>
            <person name="Bizarro C.V."/>
            <person name="Bonatto S.L."/>
            <person name="Carvalho M.O."/>
            <person name="Pinto P.M."/>
            <person name="Almeida D.F."/>
            <person name="Almeida L.G.P."/>
            <person name="Almeida R."/>
            <person name="Alves-Junior L."/>
            <person name="Assuncao E.N."/>
            <person name="Azevedo V.A.C."/>
            <person name="Bogo M.R."/>
            <person name="Brigido M.M."/>
            <person name="Brocchi M."/>
            <person name="Burity H.A."/>
            <person name="Camargo A.A."/>
            <person name="Camargo S.S."/>
            <person name="Carepo M.S."/>
            <person name="Carraro D.M."/>
            <person name="de Mattos Cascardo J.C."/>
            <person name="Castro L.A."/>
            <person name="Cavalcanti G."/>
            <person name="Chemale G."/>
            <person name="Collevatti R.G."/>
            <person name="Cunha C.W."/>
            <person name="Dallagiovanna B."/>
            <person name="Dambros B.P."/>
            <person name="Dellagostin O.A."/>
            <person name="Falcao C."/>
            <person name="Fantinatti-Garboggini F."/>
            <person name="Felipe M.S.S."/>
            <person name="Fiorentin L."/>
            <person name="Franco G.R."/>
            <person name="Freitas N.S.A."/>
            <person name="Frias D."/>
            <person name="Grangeiro T.B."/>
            <person name="Grisard E.C."/>
            <person name="Guimaraes C.T."/>
            <person name="Hungria M."/>
            <person name="Jardim S.N."/>
            <person name="Krieger M.A."/>
            <person name="Laurino J.P."/>
            <person name="Lima L.F.A."/>
            <person name="Lopes M.I."/>
            <person name="Loreto E.L.S."/>
            <person name="Madeira H.M.F."/>
            <person name="Manfio G.P."/>
            <person name="Maranhao A.Q."/>
            <person name="Martinkovics C.T."/>
            <person name="Medeiros S.R.B."/>
            <person name="Moreira M.A.M."/>
            <person name="Neiva M."/>
            <person name="Ramalho-Neto C.E."/>
            <person name="Nicolas M.F."/>
            <person name="Oliveira S.C."/>
            <person name="Paixao R.F.C."/>
            <person name="Pedrosa F.O."/>
            <person name="Pena S.D.J."/>
            <person name="Pereira M."/>
            <person name="Pereira-Ferrari L."/>
            <person name="Piffer I."/>
            <person name="Pinto L.S."/>
            <person name="Potrich D.P."/>
            <person name="Salim A.C.M."/>
            <person name="Santos F.R."/>
            <person name="Schmitt R."/>
            <person name="Schneider M.P.C."/>
            <person name="Schrank A."/>
            <person name="Schrank I.S."/>
            <person name="Schuck A.F."/>
            <person name="Seuanez H.N."/>
            <person name="Silva D.W."/>
            <person name="Silva R."/>
            <person name="Silva S.C."/>
            <person name="Soares C.M.A."/>
            <person name="Souza K.R.L."/>
            <person name="Souza R.C."/>
            <person name="Staats C.C."/>
            <person name="Steffens M.B.R."/>
            <person name="Teixeira S.M.R."/>
            <person name="Urmenyi T.P."/>
            <person name="Vainstein M.H."/>
            <person name="Zuccherato L.W."/>
            <person name="Simpson A.J.G."/>
            <person name="Zaha A."/>
        </authorList>
    </citation>
    <scope>NUCLEOTIDE SEQUENCE [LARGE SCALE GENOMIC DNA]</scope>
    <source>
        <strain>7448</strain>
    </source>
</reference>
<gene>
    <name evidence="1" type="primary">glyA</name>
    <name type="ordered locus">MHP7448_0224</name>
</gene>
<evidence type="ECO:0000255" key="1">
    <source>
        <dbReference type="HAMAP-Rule" id="MF_00051"/>
    </source>
</evidence>
<protein>
    <recommendedName>
        <fullName evidence="1">Probable serine hydroxymethyltransferase</fullName>
        <shortName evidence="1">SHMT</shortName>
        <shortName evidence="1">Serine methylase</shortName>
        <ecNumber evidence="1">2.1.2.1</ecNumber>
    </recommendedName>
</protein>
<proteinExistence type="inferred from homology"/>
<name>GLYA_MESH7</name>
<organism>
    <name type="scientific">Mesomycoplasma hyopneumoniae (strain 7448)</name>
    <name type="common">Mycoplasma hyopneumoniae</name>
    <dbReference type="NCBI Taxonomy" id="262722"/>
    <lineage>
        <taxon>Bacteria</taxon>
        <taxon>Bacillati</taxon>
        <taxon>Mycoplasmatota</taxon>
        <taxon>Mycoplasmoidales</taxon>
        <taxon>Metamycoplasmataceae</taxon>
        <taxon>Mesomycoplasma</taxon>
    </lineage>
</organism>
<comment type="function">
    <text evidence="1">Catalyzes the reversible interconversion of serine and glycine with tetrahydrofolate (THF) serving as the one-carbon carrier. This reaction serves as the major source of one-carbon groups required for the biosynthesis of purines, thymidylate, methionine, and other important biomolecules.</text>
</comment>
<comment type="catalytic activity">
    <reaction evidence="1">
        <text>(6R)-5,10-methylene-5,6,7,8-tetrahydrofolate + glycine + H2O = (6S)-5,6,7,8-tetrahydrofolate + L-serine</text>
        <dbReference type="Rhea" id="RHEA:15481"/>
        <dbReference type="ChEBI" id="CHEBI:15377"/>
        <dbReference type="ChEBI" id="CHEBI:15636"/>
        <dbReference type="ChEBI" id="CHEBI:33384"/>
        <dbReference type="ChEBI" id="CHEBI:57305"/>
        <dbReference type="ChEBI" id="CHEBI:57453"/>
        <dbReference type="EC" id="2.1.2.1"/>
    </reaction>
</comment>
<comment type="cofactor">
    <cofactor evidence="1">
        <name>pyridoxal 5'-phosphate</name>
        <dbReference type="ChEBI" id="CHEBI:597326"/>
    </cofactor>
</comment>
<comment type="pathway">
    <text evidence="1">One-carbon metabolism; tetrahydrofolate interconversion.</text>
</comment>
<comment type="subunit">
    <text evidence="1">Homodimer.</text>
</comment>
<comment type="subcellular location">
    <subcellularLocation>
        <location evidence="1">Cytoplasm</location>
    </subcellularLocation>
</comment>
<comment type="similarity">
    <text evidence="1">Belongs to the SHMT family.</text>
</comment>
<sequence>MYKKIKLRDQQISELINLESKRQNSQIELIASENYASEDVILANGTSLSNKYGEGYPGKRYYGGCTFIDQIEKIAIERVKKLFKIEYANVQPYSGSSANAAVFAALLKPGDKILGLDLNAGGHLSHGYKINFSGMFYSGISYFLDENELLDYEAIEKIALKTKPNLIICGYSAYSRKIDFARFRQIADKVNAFLLADIAHIAGLIAAGQHPSPVGYAHIITSTTQKTLRGPRGGLILTSSKEIAAKIDKVVFPGIQGGPFFHTIAAKAVAFKEALEPWFKEYCAQIVKNAAHFASEFIKKGIRIVSQGTENHLFTIDVLSSYNLNGKQAQILLESVNIITNKNTIPNDTLSPFVTSGLRLGTPAMTSRGFKEQEFSQMAEIIDFVLRKKELNALEIKEIKKKVKILTKNFPIKKSYWP</sequence>